<proteinExistence type="inferred from homology"/>
<feature type="chain" id="PRO_0000225971" description="Chaperone protein DnaK">
    <location>
        <begin position="1"/>
        <end position="624"/>
    </location>
</feature>
<feature type="region of interest" description="Disordered" evidence="2">
    <location>
        <begin position="470"/>
        <end position="504"/>
    </location>
</feature>
<feature type="region of interest" description="Disordered" evidence="2">
    <location>
        <begin position="577"/>
        <end position="624"/>
    </location>
</feature>
<feature type="compositionally biased region" description="Basic and acidic residues" evidence="2">
    <location>
        <begin position="481"/>
        <end position="504"/>
    </location>
</feature>
<feature type="compositionally biased region" description="Low complexity" evidence="2">
    <location>
        <begin position="577"/>
        <end position="605"/>
    </location>
</feature>
<feature type="compositionally biased region" description="Basic and acidic residues" evidence="2">
    <location>
        <begin position="615"/>
        <end position="624"/>
    </location>
</feature>
<feature type="modified residue" description="Phosphothreonine; by autocatalysis" evidence="1">
    <location>
        <position position="174"/>
    </location>
</feature>
<protein>
    <recommendedName>
        <fullName evidence="1">Chaperone protein DnaK</fullName>
    </recommendedName>
    <alternativeName>
        <fullName evidence="1">HSP70</fullName>
    </alternativeName>
    <alternativeName>
        <fullName evidence="1">Heat shock 70 kDa protein</fullName>
    </alternativeName>
    <alternativeName>
        <fullName evidence="1">Heat shock protein 70</fullName>
    </alternativeName>
</protein>
<reference key="1">
    <citation type="journal article" date="2004" name="Proc. Natl. Acad. Sci. U.S.A.">
        <title>The genome sequence of the probiotic intestinal bacterium Lactobacillus johnsonii NCC 533.</title>
        <authorList>
            <person name="Pridmore R.D."/>
            <person name="Berger B."/>
            <person name="Desiere F."/>
            <person name="Vilanova D."/>
            <person name="Barretto C."/>
            <person name="Pittet A.-C."/>
            <person name="Zwahlen M.-C."/>
            <person name="Rouvet M."/>
            <person name="Altermann E."/>
            <person name="Barrangou R."/>
            <person name="Mollet B."/>
            <person name="Mercenier A."/>
            <person name="Klaenhammer T."/>
            <person name="Arigoni F."/>
            <person name="Schell M.A."/>
        </authorList>
    </citation>
    <scope>NUCLEOTIDE SEQUENCE [LARGE SCALE GENOMIC DNA]</scope>
    <source>
        <strain>CNCM I-1225 / La1 / NCC 533</strain>
    </source>
</reference>
<organism>
    <name type="scientific">Lactobacillus johnsonii (strain CNCM I-12250 / La1 / NCC 533)</name>
    <dbReference type="NCBI Taxonomy" id="257314"/>
    <lineage>
        <taxon>Bacteria</taxon>
        <taxon>Bacillati</taxon>
        <taxon>Bacillota</taxon>
        <taxon>Bacilli</taxon>
        <taxon>Lactobacillales</taxon>
        <taxon>Lactobacillaceae</taxon>
        <taxon>Lactobacillus</taxon>
    </lineage>
</organism>
<sequence>MSKVIGIDLGTTNSAVAVLEGKEPKIITNPEGNRTTPSVVAFKNGEIQVGEVAKRQAITNPNTIVSIKSHMGEEGYKVKVGDKEYTPQEISAFILQYIKKFSEDYLGEKVTDAVITVPAYFNDAQRQATKDAGKIAGLNVQRIINEPTASALAYGLDKDENDEKVLVYDLGGGTFDVSILQLGDGVFQVLSTNGDTHLGGDDFDQRIMDWLIQNFKEENGVDLSNDKMALQRLKDAAEKAKKDLSGVSSTHISLPFISAGEAGPLHLEADLTRAKFDELTDDLVQKTKVAFDNALSDAGLTVNDIDKVILNGGSTRIPAVQKAVKDWAGKEPDHSINPDEAVALGAAIQGGVISGDVKDIVLLDVTPLSLGIETMGGVFTKLIDRNTTIPTSKSQIFSTAADNQPAVDVHVLQGERPMAADDKTLGRFELTDIPPAPRGVPQIQVTFDIDKNGIVNVSAKDMGTGKEQKITIKSSSGLSDEEIKKMQKDAEEHAEEDKKRKEEVDLRNEVDQLIFTTEKTLKETEGKVPETETKNVQDALDALKKAQKDNNLDEMKEKKEALSKAAQDLAVKLYQQNGGAQGAAGQAGPQGPQNGGQPNNDNGSDNGQGGSTVDGDFHKVDPDK</sequence>
<gene>
    <name evidence="1" type="primary">dnaK</name>
    <name type="ordered locus">LJ_1479</name>
</gene>
<accession>Q74IT6</accession>
<evidence type="ECO:0000255" key="1">
    <source>
        <dbReference type="HAMAP-Rule" id="MF_00332"/>
    </source>
</evidence>
<evidence type="ECO:0000256" key="2">
    <source>
        <dbReference type="SAM" id="MobiDB-lite"/>
    </source>
</evidence>
<name>DNAK_LACJO</name>
<keyword id="KW-0067">ATP-binding</keyword>
<keyword id="KW-0143">Chaperone</keyword>
<keyword id="KW-0547">Nucleotide-binding</keyword>
<keyword id="KW-0597">Phosphoprotein</keyword>
<keyword id="KW-0346">Stress response</keyword>
<comment type="function">
    <text evidence="1">Acts as a chaperone.</text>
</comment>
<comment type="induction">
    <text evidence="1">By stress conditions e.g. heat shock.</text>
</comment>
<comment type="similarity">
    <text evidence="1">Belongs to the heat shock protein 70 family.</text>
</comment>
<dbReference type="EMBL" id="AE017198">
    <property type="protein sequence ID" value="AAS09247.1"/>
    <property type="molecule type" value="Genomic_DNA"/>
</dbReference>
<dbReference type="RefSeq" id="WP_004897147.1">
    <property type="nucleotide sequence ID" value="NC_005362.1"/>
</dbReference>
<dbReference type="SMR" id="Q74IT6"/>
<dbReference type="KEGG" id="ljo:LJ_1479"/>
<dbReference type="eggNOG" id="COG0443">
    <property type="taxonomic scope" value="Bacteria"/>
</dbReference>
<dbReference type="HOGENOM" id="CLU_005965_2_1_9"/>
<dbReference type="Proteomes" id="UP000000581">
    <property type="component" value="Chromosome"/>
</dbReference>
<dbReference type="GO" id="GO:0005524">
    <property type="term" value="F:ATP binding"/>
    <property type="evidence" value="ECO:0007669"/>
    <property type="project" value="UniProtKB-UniRule"/>
</dbReference>
<dbReference type="GO" id="GO:0140662">
    <property type="term" value="F:ATP-dependent protein folding chaperone"/>
    <property type="evidence" value="ECO:0007669"/>
    <property type="project" value="InterPro"/>
</dbReference>
<dbReference type="GO" id="GO:0051082">
    <property type="term" value="F:unfolded protein binding"/>
    <property type="evidence" value="ECO:0007669"/>
    <property type="project" value="InterPro"/>
</dbReference>
<dbReference type="CDD" id="cd10234">
    <property type="entry name" value="ASKHA_NBD_HSP70_DnaK-like"/>
    <property type="match status" value="1"/>
</dbReference>
<dbReference type="FunFam" id="2.60.34.10:FF:000014">
    <property type="entry name" value="Chaperone protein DnaK HSP70"/>
    <property type="match status" value="1"/>
</dbReference>
<dbReference type="FunFam" id="1.20.1270.10:FF:000001">
    <property type="entry name" value="Molecular chaperone DnaK"/>
    <property type="match status" value="1"/>
</dbReference>
<dbReference type="FunFam" id="3.30.420.40:FF:000071">
    <property type="entry name" value="Molecular chaperone DnaK"/>
    <property type="match status" value="1"/>
</dbReference>
<dbReference type="FunFam" id="3.90.640.10:FF:000003">
    <property type="entry name" value="Molecular chaperone DnaK"/>
    <property type="match status" value="1"/>
</dbReference>
<dbReference type="Gene3D" id="1.20.1270.10">
    <property type="match status" value="1"/>
</dbReference>
<dbReference type="Gene3D" id="3.30.420.40">
    <property type="match status" value="2"/>
</dbReference>
<dbReference type="Gene3D" id="3.90.640.10">
    <property type="entry name" value="Actin, Chain A, domain 4"/>
    <property type="match status" value="1"/>
</dbReference>
<dbReference type="Gene3D" id="2.60.34.10">
    <property type="entry name" value="Substrate Binding Domain Of DNAk, Chain A, domain 1"/>
    <property type="match status" value="1"/>
</dbReference>
<dbReference type="HAMAP" id="MF_00332">
    <property type="entry name" value="DnaK"/>
    <property type="match status" value="1"/>
</dbReference>
<dbReference type="InterPro" id="IPR043129">
    <property type="entry name" value="ATPase_NBD"/>
</dbReference>
<dbReference type="InterPro" id="IPR012725">
    <property type="entry name" value="Chaperone_DnaK"/>
</dbReference>
<dbReference type="InterPro" id="IPR018181">
    <property type="entry name" value="Heat_shock_70_CS"/>
</dbReference>
<dbReference type="InterPro" id="IPR029048">
    <property type="entry name" value="HSP70_C_sf"/>
</dbReference>
<dbReference type="InterPro" id="IPR029047">
    <property type="entry name" value="HSP70_peptide-bd_sf"/>
</dbReference>
<dbReference type="InterPro" id="IPR013126">
    <property type="entry name" value="Hsp_70_fam"/>
</dbReference>
<dbReference type="NCBIfam" id="NF001413">
    <property type="entry name" value="PRK00290.1"/>
    <property type="match status" value="1"/>
</dbReference>
<dbReference type="NCBIfam" id="TIGR02350">
    <property type="entry name" value="prok_dnaK"/>
    <property type="match status" value="1"/>
</dbReference>
<dbReference type="PANTHER" id="PTHR19375">
    <property type="entry name" value="HEAT SHOCK PROTEIN 70KDA"/>
    <property type="match status" value="1"/>
</dbReference>
<dbReference type="Pfam" id="PF00012">
    <property type="entry name" value="HSP70"/>
    <property type="match status" value="1"/>
</dbReference>
<dbReference type="PRINTS" id="PR00301">
    <property type="entry name" value="HEATSHOCK70"/>
</dbReference>
<dbReference type="SUPFAM" id="SSF53067">
    <property type="entry name" value="Actin-like ATPase domain"/>
    <property type="match status" value="2"/>
</dbReference>
<dbReference type="SUPFAM" id="SSF100934">
    <property type="entry name" value="Heat shock protein 70kD (HSP70), C-terminal subdomain"/>
    <property type="match status" value="1"/>
</dbReference>
<dbReference type="SUPFAM" id="SSF100920">
    <property type="entry name" value="Heat shock protein 70kD (HSP70), peptide-binding domain"/>
    <property type="match status" value="1"/>
</dbReference>
<dbReference type="PROSITE" id="PS00297">
    <property type="entry name" value="HSP70_1"/>
    <property type="match status" value="1"/>
</dbReference>
<dbReference type="PROSITE" id="PS00329">
    <property type="entry name" value="HSP70_2"/>
    <property type="match status" value="1"/>
</dbReference>
<dbReference type="PROSITE" id="PS01036">
    <property type="entry name" value="HSP70_3"/>
    <property type="match status" value="1"/>
</dbReference>